<feature type="chain" id="PRO_0000078290" description="Heat shock 70 kDa protein">
    <location>
        <begin position="1"/>
        <end position="654"/>
    </location>
</feature>
<feature type="region of interest" description="Disordered" evidence="1">
    <location>
        <begin position="621"/>
        <end position="654"/>
    </location>
</feature>
<feature type="compositionally biased region" description="Gly residues" evidence="1">
    <location>
        <begin position="621"/>
        <end position="638"/>
    </location>
</feature>
<feature type="compositionally biased region" description="Low complexity" evidence="1">
    <location>
        <begin position="639"/>
        <end position="648"/>
    </location>
</feature>
<keyword id="KW-0067">ATP-binding</keyword>
<keyword id="KW-0547">Nucleotide-binding</keyword>
<keyword id="KW-1185">Reference proteome</keyword>
<keyword id="KW-0346">Stress response</keyword>
<sequence>MSKAPAIGIDLGTTYSCVGVFQHGKVEIIANEQGNRTTPSYVAFTDTERLIGDAAKNQVAMNPSNTVFDAKRLIGRKFNDPSVTSDRKHWPFNVIDDGSRPKIQVEFKGETKSFYPEEISSMVLLKMEEIADAYLGKKVTDVVITVPAYFNDSQRQATKDAGVIAGLNVLRIINEPTAAAIAYGLDKKVGTEKNVLIFDLGGGTFDVSILAIEDGIFEIKSTAGDTHLGGEDFDNRLVNHFVDEFKRKHKKDISSNKRALRRLRTACERAKRTLSASTQASVEIDSLFDGIDFYTSITRARFEELCIDLFRGTLGPVADAIRGAGKNSSGQNFSKSDIHEVVLVGGSTRIPKVQSLLQEFFNGKELNKSINPDEAVAYGAAVQAAILAGDKHEAVQDLLLLDVAPLSLGIETAGGVFTPLIKRNTTVPTKYSQVFTTYSDNQPGVLIQVFEGERSMTAHNNLLGKFELSGIPLAPRGVPQIEVTFDVDANGILNVSALDKSTGKENKITITNDKGRLSKEDIERMVQEAEKYKADDELQRDKVQAKNSLESYCYNMKQTVEDEKVKGKISEEDKKTIIKKCNETVEWVDKNQTAEKDQYEHKQKELEKVCNPIITKLYQAGGGMPGGMPGGMPGGMPGSGSKASSGGPTIEEVD</sequence>
<protein>
    <recommendedName>
        <fullName>Heat shock 70 kDa protein</fullName>
    </recommendedName>
</protein>
<dbReference type="EMBL" id="M84019">
    <property type="protein sequence ID" value="AAA29213.1"/>
    <property type="molecule type" value="Genomic_DNA"/>
</dbReference>
<dbReference type="PIR" id="S27004">
    <property type="entry name" value="S27004"/>
</dbReference>
<dbReference type="SMR" id="Q05944"/>
<dbReference type="OrthoDB" id="2401965at2759"/>
<dbReference type="Proteomes" id="UP000694840">
    <property type="component" value="Unplaced"/>
</dbReference>
<dbReference type="GO" id="GO:0005524">
    <property type="term" value="F:ATP binding"/>
    <property type="evidence" value="ECO:0007669"/>
    <property type="project" value="UniProtKB-KW"/>
</dbReference>
<dbReference type="GO" id="GO:0140662">
    <property type="term" value="F:ATP-dependent protein folding chaperone"/>
    <property type="evidence" value="ECO:0007669"/>
    <property type="project" value="InterPro"/>
</dbReference>
<dbReference type="CDD" id="cd10233">
    <property type="entry name" value="ASKHA_NBD_HSP70_HSPA1"/>
    <property type="match status" value="1"/>
</dbReference>
<dbReference type="FunFam" id="2.60.34.10:FF:000002">
    <property type="entry name" value="Heat shock 70 kDa"/>
    <property type="match status" value="1"/>
</dbReference>
<dbReference type="FunFam" id="3.30.420.40:FF:000172">
    <property type="entry name" value="Heat shock 70 kDa protein"/>
    <property type="match status" value="1"/>
</dbReference>
<dbReference type="FunFam" id="3.30.30.30:FF:000001">
    <property type="entry name" value="heat shock 70 kDa protein-like"/>
    <property type="match status" value="1"/>
</dbReference>
<dbReference type="FunFam" id="3.90.640.10:FF:000134">
    <property type="entry name" value="Heat shock cognate 71 kDa protein"/>
    <property type="match status" value="1"/>
</dbReference>
<dbReference type="FunFam" id="1.20.1270.10:FF:000003">
    <property type="entry name" value="heat shock cognate 71 kDa protein-like"/>
    <property type="match status" value="1"/>
</dbReference>
<dbReference type="FunFam" id="3.30.420.40:FF:000026">
    <property type="entry name" value="Heat shock protein 70"/>
    <property type="match status" value="1"/>
</dbReference>
<dbReference type="Gene3D" id="1.20.1270.10">
    <property type="match status" value="1"/>
</dbReference>
<dbReference type="Gene3D" id="3.30.30.30">
    <property type="match status" value="1"/>
</dbReference>
<dbReference type="Gene3D" id="3.30.420.40">
    <property type="match status" value="2"/>
</dbReference>
<dbReference type="Gene3D" id="3.90.640.10">
    <property type="entry name" value="Actin, Chain A, domain 4"/>
    <property type="match status" value="1"/>
</dbReference>
<dbReference type="Gene3D" id="2.60.34.10">
    <property type="entry name" value="Substrate Binding Domain Of DNAk, Chain A, domain 1"/>
    <property type="match status" value="1"/>
</dbReference>
<dbReference type="InterPro" id="IPR043129">
    <property type="entry name" value="ATPase_NBD"/>
</dbReference>
<dbReference type="InterPro" id="IPR018181">
    <property type="entry name" value="Heat_shock_70_CS"/>
</dbReference>
<dbReference type="InterPro" id="IPR029048">
    <property type="entry name" value="HSP70_C_sf"/>
</dbReference>
<dbReference type="InterPro" id="IPR029047">
    <property type="entry name" value="HSP70_peptide-bd_sf"/>
</dbReference>
<dbReference type="InterPro" id="IPR013126">
    <property type="entry name" value="Hsp_70_fam"/>
</dbReference>
<dbReference type="NCBIfam" id="NF001413">
    <property type="entry name" value="PRK00290.1"/>
    <property type="match status" value="1"/>
</dbReference>
<dbReference type="PANTHER" id="PTHR19375">
    <property type="entry name" value="HEAT SHOCK PROTEIN 70KDA"/>
    <property type="match status" value="1"/>
</dbReference>
<dbReference type="Pfam" id="PF00012">
    <property type="entry name" value="HSP70"/>
    <property type="match status" value="1"/>
</dbReference>
<dbReference type="PRINTS" id="PR00301">
    <property type="entry name" value="HEATSHOCK70"/>
</dbReference>
<dbReference type="SUPFAM" id="SSF53067">
    <property type="entry name" value="Actin-like ATPase domain"/>
    <property type="match status" value="2"/>
</dbReference>
<dbReference type="SUPFAM" id="SSF100934">
    <property type="entry name" value="Heat shock protein 70kD (HSP70), C-terminal subdomain"/>
    <property type="match status" value="1"/>
</dbReference>
<dbReference type="SUPFAM" id="SSF100920">
    <property type="entry name" value="Heat shock protein 70kD (HSP70), peptide-binding domain"/>
    <property type="match status" value="1"/>
</dbReference>
<dbReference type="PROSITE" id="PS00297">
    <property type="entry name" value="HSP70_1"/>
    <property type="match status" value="1"/>
</dbReference>
<dbReference type="PROSITE" id="PS00329">
    <property type="entry name" value="HSP70_2"/>
    <property type="match status" value="1"/>
</dbReference>
<dbReference type="PROSITE" id="PS01036">
    <property type="entry name" value="HSP70_3"/>
    <property type="match status" value="1"/>
</dbReference>
<proteinExistence type="inferred from homology"/>
<accession>Q05944</accession>
<name>HSP70_HYDVU</name>
<reference key="1">
    <citation type="journal article" date="1992" name="Eur. J. Biochem.">
        <title>Cloning and expression of a heat-inducible hsp70 gene in two species of Hydra which differ in their stress response.</title>
        <authorList>
            <person name="Gellner K."/>
            <person name="Praetzel G."/>
            <person name="Bosch T.C.G."/>
        </authorList>
    </citation>
    <scope>NUCLEOTIDE SEQUENCE [GENOMIC DNA]</scope>
</reference>
<comment type="similarity">
    <text evidence="2">Belongs to the heat shock protein 70 family.</text>
</comment>
<evidence type="ECO:0000256" key="1">
    <source>
        <dbReference type="SAM" id="MobiDB-lite"/>
    </source>
</evidence>
<evidence type="ECO:0000305" key="2"/>
<organism>
    <name type="scientific">Hydra vulgaris</name>
    <name type="common">Hydra</name>
    <name type="synonym">Hydra attenuata</name>
    <dbReference type="NCBI Taxonomy" id="6087"/>
    <lineage>
        <taxon>Eukaryota</taxon>
        <taxon>Metazoa</taxon>
        <taxon>Cnidaria</taxon>
        <taxon>Hydrozoa</taxon>
        <taxon>Hydroidolina</taxon>
        <taxon>Anthoathecata</taxon>
        <taxon>Aplanulata</taxon>
        <taxon>Hydridae</taxon>
        <taxon>Hydra</taxon>
    </lineage>
</organism>
<gene>
    <name type="primary">HSP70.1</name>
</gene>